<reference key="1">
    <citation type="journal article" date="2000" name="Nature">
        <title>The genome sequence of the thermoacidophilic scavenger Thermoplasma acidophilum.</title>
        <authorList>
            <person name="Ruepp A."/>
            <person name="Graml W."/>
            <person name="Santos-Martinez M.-L."/>
            <person name="Koretke K.K."/>
            <person name="Volker C."/>
            <person name="Mewes H.-W."/>
            <person name="Frishman D."/>
            <person name="Stocker S."/>
            <person name="Lupas A.N."/>
            <person name="Baumeister W."/>
        </authorList>
    </citation>
    <scope>NUCLEOTIDE SEQUENCE [LARGE SCALE GENOMIC DNA]</scope>
    <source>
        <strain>ATCC 25905 / DSM 1728 / JCM 9062 / NBRC 15155 / AMRC-C165</strain>
    </source>
</reference>
<feature type="chain" id="PRO_0000146707" description="Nucleoside-triphosphatase THEP1">
    <location>
        <begin position="1"/>
        <end position="181"/>
    </location>
</feature>
<feature type="binding site" evidence="1">
    <location>
        <begin position="12"/>
        <end position="19"/>
    </location>
    <ligand>
        <name>ATP</name>
        <dbReference type="ChEBI" id="CHEBI:30616"/>
    </ligand>
</feature>
<feature type="binding site" evidence="1">
    <location>
        <begin position="104"/>
        <end position="111"/>
    </location>
    <ligand>
        <name>ATP</name>
        <dbReference type="ChEBI" id="CHEBI:30616"/>
    </ligand>
</feature>
<comment type="function">
    <text evidence="1">Has nucleotide phosphatase activity towards ATP, GTP, CTP, TTP and UTP. May hydrolyze nucleoside diphosphates with lower efficiency.</text>
</comment>
<comment type="catalytic activity">
    <reaction evidence="1">
        <text>a ribonucleoside 5'-triphosphate + H2O = a ribonucleoside 5'-diphosphate + phosphate + H(+)</text>
        <dbReference type="Rhea" id="RHEA:23680"/>
        <dbReference type="ChEBI" id="CHEBI:15377"/>
        <dbReference type="ChEBI" id="CHEBI:15378"/>
        <dbReference type="ChEBI" id="CHEBI:43474"/>
        <dbReference type="ChEBI" id="CHEBI:57930"/>
        <dbReference type="ChEBI" id="CHEBI:61557"/>
        <dbReference type="EC" id="3.6.1.15"/>
    </reaction>
</comment>
<comment type="similarity">
    <text evidence="1">Belongs to the THEP1 NTPase family.</text>
</comment>
<name>NTPTH_THEAC</name>
<evidence type="ECO:0000255" key="1">
    <source>
        <dbReference type="HAMAP-Rule" id="MF_00796"/>
    </source>
</evidence>
<gene>
    <name type="ordered locus">Ta0998</name>
</gene>
<keyword id="KW-0067">ATP-binding</keyword>
<keyword id="KW-0378">Hydrolase</keyword>
<keyword id="KW-0547">Nucleotide-binding</keyword>
<keyword id="KW-1185">Reference proteome</keyword>
<sequence length="181" mass="20194">MIPLAIKIGITGPVGSIKSEALQKIIDMLKNDNLNVQGVLVSKVTNNGKLTGYTIEDIESKRKAQFCFDNFVSRVKIDKLGVDTKILEEILIPSLQKARETADVIVIDEIGKLENTTKKVHAEIEETLKCGKPLIVTLHKRSRNPVLQEIKSLEGVRVFDITPINKNILPFKVMHVLKGEE</sequence>
<accession>Q9HJH0</accession>
<protein>
    <recommendedName>
        <fullName evidence="1">Nucleoside-triphosphatase THEP1</fullName>
        <shortName evidence="1">NTPase THEP1</shortName>
        <ecNumber evidence="1">3.6.1.15</ecNumber>
    </recommendedName>
    <alternativeName>
        <fullName evidence="1">Nucleoside triphosphate phosphohydrolase</fullName>
    </alternativeName>
</protein>
<organism>
    <name type="scientific">Thermoplasma acidophilum (strain ATCC 25905 / DSM 1728 / JCM 9062 / NBRC 15155 / AMRC-C165)</name>
    <dbReference type="NCBI Taxonomy" id="273075"/>
    <lineage>
        <taxon>Archaea</taxon>
        <taxon>Methanobacteriati</taxon>
        <taxon>Thermoplasmatota</taxon>
        <taxon>Thermoplasmata</taxon>
        <taxon>Thermoplasmatales</taxon>
        <taxon>Thermoplasmataceae</taxon>
        <taxon>Thermoplasma</taxon>
    </lineage>
</organism>
<dbReference type="EC" id="3.6.1.15" evidence="1"/>
<dbReference type="EMBL" id="AL445066">
    <property type="protein sequence ID" value="CAC12127.1"/>
    <property type="molecule type" value="Genomic_DNA"/>
</dbReference>
<dbReference type="RefSeq" id="WP_010901409.1">
    <property type="nucleotide sequence ID" value="NC_002578.1"/>
</dbReference>
<dbReference type="SMR" id="Q9HJH0"/>
<dbReference type="FunCoup" id="Q9HJH0">
    <property type="interactions" value="100"/>
</dbReference>
<dbReference type="STRING" id="273075.gene:9572217"/>
<dbReference type="PaxDb" id="273075-Ta0998"/>
<dbReference type="EnsemblBacteria" id="CAC12127">
    <property type="protein sequence ID" value="CAC12127"/>
    <property type="gene ID" value="CAC12127"/>
</dbReference>
<dbReference type="KEGG" id="tac:Ta0998"/>
<dbReference type="eggNOG" id="arCOG01034">
    <property type="taxonomic scope" value="Archaea"/>
</dbReference>
<dbReference type="HOGENOM" id="CLU_103145_1_1_2"/>
<dbReference type="InParanoid" id="Q9HJH0"/>
<dbReference type="OrthoDB" id="52698at2157"/>
<dbReference type="Proteomes" id="UP000001024">
    <property type="component" value="Chromosome"/>
</dbReference>
<dbReference type="GO" id="GO:0005524">
    <property type="term" value="F:ATP binding"/>
    <property type="evidence" value="ECO:0007669"/>
    <property type="project" value="UniProtKB-UniRule"/>
</dbReference>
<dbReference type="GO" id="GO:0017111">
    <property type="term" value="F:ribonucleoside triphosphate phosphatase activity"/>
    <property type="evidence" value="ECO:0007669"/>
    <property type="project" value="UniProtKB-UniRule"/>
</dbReference>
<dbReference type="CDD" id="cd19482">
    <property type="entry name" value="RecA-like_Thep1"/>
    <property type="match status" value="1"/>
</dbReference>
<dbReference type="Gene3D" id="3.40.50.300">
    <property type="entry name" value="P-loop containing nucleotide triphosphate hydrolases"/>
    <property type="match status" value="1"/>
</dbReference>
<dbReference type="HAMAP" id="MF_00796">
    <property type="entry name" value="NTPase_1"/>
    <property type="match status" value="1"/>
</dbReference>
<dbReference type="InterPro" id="IPR004948">
    <property type="entry name" value="Nuc-triphosphatase_THEP1"/>
</dbReference>
<dbReference type="InterPro" id="IPR027417">
    <property type="entry name" value="P-loop_NTPase"/>
</dbReference>
<dbReference type="NCBIfam" id="NF010248">
    <property type="entry name" value="PRK13695.1"/>
    <property type="match status" value="1"/>
</dbReference>
<dbReference type="PANTHER" id="PTHR43146">
    <property type="entry name" value="CANCER-RELATED NUCLEOSIDE-TRIPHOSPHATASE"/>
    <property type="match status" value="1"/>
</dbReference>
<dbReference type="PANTHER" id="PTHR43146:SF1">
    <property type="entry name" value="CANCER-RELATED NUCLEOSIDE-TRIPHOSPHATASE"/>
    <property type="match status" value="1"/>
</dbReference>
<dbReference type="Pfam" id="PF03266">
    <property type="entry name" value="NTPase_1"/>
    <property type="match status" value="1"/>
</dbReference>
<dbReference type="SUPFAM" id="SSF52540">
    <property type="entry name" value="P-loop containing nucleoside triphosphate hydrolases"/>
    <property type="match status" value="1"/>
</dbReference>
<proteinExistence type="inferred from homology"/>